<gene>
    <name evidence="1" type="primary">vpu</name>
</gene>
<proteinExistence type="inferred from homology"/>
<name>VPU_HV1EL</name>
<organism>
    <name type="scientific">Human immunodeficiency virus type 1 group M subtype D (isolate ELI)</name>
    <name type="common">HIV-1</name>
    <dbReference type="NCBI Taxonomy" id="11689"/>
    <lineage>
        <taxon>Viruses</taxon>
        <taxon>Riboviria</taxon>
        <taxon>Pararnavirae</taxon>
        <taxon>Artverviricota</taxon>
        <taxon>Revtraviricetes</taxon>
        <taxon>Ortervirales</taxon>
        <taxon>Retroviridae</taxon>
        <taxon>Orthoretrovirinae</taxon>
        <taxon>Lentivirus</taxon>
        <taxon>Human immunodeficiency virus type 1</taxon>
    </lineage>
</organism>
<sequence length="81" mass="9268">MQPLGIIAIAALVVAIILAIVVWTIVFIEYRRIKKQRRIDCLLDRITERAEDSGNESEGDREKLSKLVEMGHHAPWDIDDL</sequence>
<organismHost>
    <name type="scientific">Homo sapiens</name>
    <name type="common">Human</name>
    <dbReference type="NCBI Taxonomy" id="9606"/>
</organismHost>
<keyword id="KW-0014">AIDS</keyword>
<keyword id="KW-0053">Apoptosis</keyword>
<keyword id="KW-1043">Host membrane</keyword>
<keyword id="KW-0945">Host-virus interaction</keyword>
<keyword id="KW-1090">Inhibition of host innate immune response by virus</keyword>
<keyword id="KW-1084">Inhibition of host tetherin by virus</keyword>
<keyword id="KW-0407">Ion channel</keyword>
<keyword id="KW-0406">Ion transport</keyword>
<keyword id="KW-0472">Membrane</keyword>
<keyword id="KW-0597">Phosphoprotein</keyword>
<keyword id="KW-1185">Reference proteome</keyword>
<keyword id="KW-0812">Transmembrane</keyword>
<keyword id="KW-1133">Transmembrane helix</keyword>
<keyword id="KW-0813">Transport</keyword>
<keyword id="KW-0899">Viral immunoevasion</keyword>
<comment type="function">
    <text evidence="1">Enhances virion budding by targeting host CD4 and Tetherin/BST2 to proteasome degradation. Degradation of CD4 prevents any unwanted premature interactions between viral Env and its host receptor CD4 in the endoplasmic reticulum. Degradation of antiretroviral protein Tetherin/BST2 is important for virion budding, as BST2 tethers new viral particles to the host cell membrane. Mechanistically, Vpu bridges either CD4 or BST2 to BTRC, a substrate recognition subunit of the Skp1/Cullin/F-box protein E3 ubiquitin ligase, induces their ubiquitination and subsequent proteasomal degradation. The alteration of the E3 ligase specificity by Vpu seems to promote the degradation of host IKBKB, leading to NF-kappa-B down-regulation and subsequent apoptosis. Acts as a viroporin that forms an oligomeric ion channel in membranes. Modulates the host DNA repair mechanisms to promote degradation of nuclear viral cDNA in cells that are already productively infected in order to suppress immune sensing and proviral hyper-integration (superinfection). Manipulates PML-NBs and modulates SUMOylation of host BLM protein thereby enhancing its DNA-end processing activity toward viral unintegrated linear DNA. Also inhibits RAD52-mediated homologous repair of viral cDNA, preventing the generation of dead-end circular forms of single copies of the long terminal repeat and permitting sustained nucleolytic attack.</text>
</comment>
<comment type="activity regulation">
    <text evidence="1">Ion channel activity is inhibited by hexamethylene amiloride in vitro.</text>
</comment>
<comment type="subunit">
    <text evidence="1">Homopentamer. Interacts with host CD4 and BRTC; these interactions induce proteasomal degradation of CD4. Interacts with host BST2; this interaction leads to the degradation of host BST2. Interacts with host FBXW11. Interacts with host AP1M1; this interaction plays a role in the mistrafficking and subsequent degradation of host BST2. Interacts with host RANBP2; this interaction allows Vpu to down-regulate host BLM sumoylation.</text>
</comment>
<comment type="subcellular location">
    <subcellularLocation>
        <location evidence="1">Host membrane</location>
        <topology evidence="1">Single-pass type I membrane protein</topology>
    </subcellularLocation>
</comment>
<comment type="domain">
    <text evidence="1">The N-terminus and transmembrane domains are required for self-oligomerization and proper virion budding, whereas the cytoplasmic domain is required for CD4 degradation. The cytoplasmic domain is composed of 2 amphipathic alpha helix that form a U-shape.</text>
</comment>
<comment type="PTM">
    <text evidence="1">Phosphorylated by host CK2. This phosphorylation is necessary for interaction with human BTRC and degradation of CD4.</text>
</comment>
<comment type="miscellaneous">
    <text evidence="1">HIV-1 lineages are divided in three main groups, M (for Major), O (for Outlier), and N (for New, or Non-M, Non-O). The vast majority of strains found worldwide belong to the group M. Group O seems to be endemic to and largely confined to Cameroon and neighboring countries in West Central Africa, where these viruses represent a small minority of HIV-1 strains. The group N is represented by a limited number of isolates from Cameroonian persons. The group M is further subdivided in 9 clades or subtypes (A to D, F to H, J and K).</text>
</comment>
<comment type="similarity">
    <text evidence="1">Belongs to the HIV-1 VPU protein family.</text>
</comment>
<evidence type="ECO:0000255" key="1">
    <source>
        <dbReference type="HAMAP-Rule" id="MF_04082"/>
    </source>
</evidence>
<dbReference type="EMBL" id="K03454">
    <property type="protein sequence ID" value="AAA44328.1"/>
    <property type="molecule type" value="Genomic_DNA"/>
</dbReference>
<dbReference type="PIR" id="S06409">
    <property type="entry name" value="S06409"/>
</dbReference>
<dbReference type="Proteomes" id="UP000007693">
    <property type="component" value="Segment"/>
</dbReference>
<dbReference type="GO" id="GO:0033644">
    <property type="term" value="C:host cell membrane"/>
    <property type="evidence" value="ECO:0007669"/>
    <property type="project" value="UniProtKB-SubCell"/>
</dbReference>
<dbReference type="GO" id="GO:0016020">
    <property type="term" value="C:membrane"/>
    <property type="evidence" value="ECO:0007669"/>
    <property type="project" value="UniProtKB-UniRule"/>
</dbReference>
<dbReference type="GO" id="GO:0042609">
    <property type="term" value="F:CD4 receptor binding"/>
    <property type="evidence" value="ECO:0007669"/>
    <property type="project" value="UniProtKB-UniRule"/>
</dbReference>
<dbReference type="GO" id="GO:0005261">
    <property type="term" value="F:monoatomic cation channel activity"/>
    <property type="evidence" value="ECO:0007669"/>
    <property type="project" value="UniProtKB-UniRule"/>
</dbReference>
<dbReference type="GO" id="GO:0032801">
    <property type="term" value="P:receptor catabolic process"/>
    <property type="evidence" value="ECO:0007669"/>
    <property type="project" value="UniProtKB-UniRule"/>
</dbReference>
<dbReference type="GO" id="GO:0052170">
    <property type="term" value="P:symbiont-mediated suppression of host innate immune response"/>
    <property type="evidence" value="ECO:0007669"/>
    <property type="project" value="UniProtKB-KW"/>
</dbReference>
<dbReference type="GO" id="GO:0039502">
    <property type="term" value="P:symbiont-mediated suppression of host type I interferon-mediated signaling pathway"/>
    <property type="evidence" value="ECO:0007669"/>
    <property type="project" value="UniProtKB-UniRule"/>
</dbReference>
<dbReference type="GO" id="GO:0039587">
    <property type="term" value="P:symbiont-mediated-mediated suppression of host tetherin activity"/>
    <property type="evidence" value="ECO:0007669"/>
    <property type="project" value="UniProtKB-UniRule"/>
</dbReference>
<dbReference type="GO" id="GO:0019076">
    <property type="term" value="P:viral release from host cell"/>
    <property type="evidence" value="ECO:0007669"/>
    <property type="project" value="UniProtKB-UniRule"/>
</dbReference>
<dbReference type="Gene3D" id="1.10.195.10">
    <property type="entry name" value="HIV-1 VPU cytoplasmic domain"/>
    <property type="match status" value="1"/>
</dbReference>
<dbReference type="HAMAP" id="MF_04082">
    <property type="entry name" value="HIV_VPU"/>
    <property type="match status" value="1"/>
</dbReference>
<dbReference type="InterPro" id="IPR008187">
    <property type="entry name" value="Vpu"/>
</dbReference>
<dbReference type="InterPro" id="IPR009032">
    <property type="entry name" value="Vpu_cyt_dom_sf"/>
</dbReference>
<dbReference type="Pfam" id="PF00558">
    <property type="entry name" value="Vpu"/>
    <property type="match status" value="1"/>
</dbReference>
<dbReference type="SUPFAM" id="SSF57647">
    <property type="entry name" value="HIV-1 VPU cytoplasmic domain"/>
    <property type="match status" value="1"/>
</dbReference>
<protein>
    <recommendedName>
        <fullName evidence="1">Protein Vpu</fullName>
    </recommendedName>
    <alternativeName>
        <fullName evidence="1">U ORF protein</fullName>
    </alternativeName>
    <alternativeName>
        <fullName evidence="1">Viral protein U</fullName>
    </alternativeName>
</protein>
<accession>P05925</accession>
<reference key="1">
    <citation type="journal article" date="1986" name="Cell">
        <title>Genetic variability of the AIDS virus: nucleotide sequence analysis of two isolates from African patients.</title>
        <authorList>
            <person name="Alizon M."/>
            <person name="Wain-Hobson S."/>
            <person name="Montagnier L."/>
            <person name="Sonigo P."/>
        </authorList>
    </citation>
    <scope>NUCLEOTIDE SEQUENCE [GENOMIC DNA]</scope>
</reference>
<reference key="2">
    <citation type="journal article" date="1988" name="Nature">
        <title>Identification of a protein encoded by the vpu gene of HIV-1.</title>
        <authorList>
            <person name="Cohen E.A."/>
            <person name="Terwilliger E.F."/>
            <person name="Sodroski J.G."/>
            <person name="Haseltine W.A."/>
        </authorList>
    </citation>
    <scope>IDENTIFICATION</scope>
</reference>
<feature type="chain" id="PRO_0000085420" description="Protein Vpu">
    <location>
        <begin position="1"/>
        <end position="81"/>
    </location>
</feature>
<feature type="topological domain" description="Extracellular" evidence="1">
    <location>
        <begin position="1"/>
        <end position="7"/>
    </location>
</feature>
<feature type="transmembrane region" description="Helical" evidence="1">
    <location>
        <begin position="8"/>
        <end position="28"/>
    </location>
</feature>
<feature type="topological domain" description="Cytoplasmic" evidence="1">
    <location>
        <begin position="29"/>
        <end position="81"/>
    </location>
</feature>
<feature type="modified residue" description="Phosphoserine; by host CK2" evidence="1">
    <location>
        <position position="53"/>
    </location>
</feature>
<feature type="modified residue" description="Phosphoserine; by host CK2" evidence="1">
    <location>
        <position position="57"/>
    </location>
</feature>